<comment type="function">
    <text evidence="1">Involved in multidrug efflux.</text>
</comment>
<comment type="subcellular location">
    <subcellularLocation>
        <location evidence="3">Cell membrane</location>
        <topology evidence="3">Multi-pass membrane protein</topology>
    </subcellularLocation>
</comment>
<comment type="similarity">
    <text evidence="3">Belongs to the multidrug resistance efflux pump SepA family.</text>
</comment>
<protein>
    <recommendedName>
        <fullName>Multidrug resistance efflux pump SepA</fullName>
    </recommendedName>
    <alternativeName>
        <fullName>Antiseptic resistance protein SepA</fullName>
    </alternativeName>
    <alternativeName>
        <fullName>Staphylococcal efflux pump A</fullName>
    </alternativeName>
</protein>
<reference key="1">
    <citation type="journal article" date="2001" name="Lancet">
        <title>Whole genome sequencing of meticillin-resistant Staphylococcus aureus.</title>
        <authorList>
            <person name="Kuroda M."/>
            <person name="Ohta T."/>
            <person name="Uchiyama I."/>
            <person name="Baba T."/>
            <person name="Yuzawa H."/>
            <person name="Kobayashi I."/>
            <person name="Cui L."/>
            <person name="Oguchi A."/>
            <person name="Aoki K."/>
            <person name="Nagai Y."/>
            <person name="Lian J.-Q."/>
            <person name="Ito T."/>
            <person name="Kanamori M."/>
            <person name="Matsumaru H."/>
            <person name="Maruyama A."/>
            <person name="Murakami H."/>
            <person name="Hosoyama A."/>
            <person name="Mizutani-Ui Y."/>
            <person name="Takahashi N.K."/>
            <person name="Sawano T."/>
            <person name="Inoue R."/>
            <person name="Kaito C."/>
            <person name="Sekimizu K."/>
            <person name="Hirakawa H."/>
            <person name="Kuhara S."/>
            <person name="Goto S."/>
            <person name="Yabuzaki J."/>
            <person name="Kanehisa M."/>
            <person name="Yamashita A."/>
            <person name="Oshima K."/>
            <person name="Furuya K."/>
            <person name="Yoshino C."/>
            <person name="Shiba T."/>
            <person name="Hattori M."/>
            <person name="Ogasawara N."/>
            <person name="Hayashi H."/>
            <person name="Hiramatsu K."/>
        </authorList>
    </citation>
    <scope>NUCLEOTIDE SEQUENCE [LARGE SCALE GENOMIC DNA]</scope>
    <source>
        <strain>N315</strain>
    </source>
</reference>
<keyword id="KW-1003">Cell membrane</keyword>
<keyword id="KW-0472">Membrane</keyword>
<keyword id="KW-0812">Transmembrane</keyword>
<keyword id="KW-1133">Transmembrane helix</keyword>
<keyword id="KW-0813">Transport</keyword>
<accession>Q7A4A6</accession>
<name>MDEP_STAAN</name>
<proteinExistence type="inferred from homology"/>
<dbReference type="EMBL" id="BA000018">
    <property type="protein sequence ID" value="BAB43260.1"/>
    <property type="molecule type" value="Genomic_DNA"/>
</dbReference>
<dbReference type="PIR" id="C90012">
    <property type="entry name" value="C90012"/>
</dbReference>
<dbReference type="RefSeq" id="WP_000636857.1">
    <property type="nucleotide sequence ID" value="NC_002745.2"/>
</dbReference>
<dbReference type="EnsemblBacteria" id="BAB43260">
    <property type="protein sequence ID" value="BAB43260"/>
    <property type="gene ID" value="BAB43260"/>
</dbReference>
<dbReference type="KEGG" id="sau:SA1971"/>
<dbReference type="HOGENOM" id="CLU_151983_0_0_9"/>
<dbReference type="GO" id="GO:0005886">
    <property type="term" value="C:plasma membrane"/>
    <property type="evidence" value="ECO:0007669"/>
    <property type="project" value="UniProtKB-SubCell"/>
</dbReference>
<dbReference type="InterPro" id="IPR031396">
    <property type="entry name" value="SepA"/>
</dbReference>
<dbReference type="Pfam" id="PF17080">
    <property type="entry name" value="SepA"/>
    <property type="match status" value="1"/>
</dbReference>
<gene>
    <name type="primary">sepA</name>
    <name type="ordered locus">SA1971</name>
</gene>
<sequence>MIVNYLKHKFYNLLTTMIVLFIFVLSGAIFLTFLGFGLYGLSRILIYFRLGDFTYNRSMYDNLLYYGSYIIFGYFIIFAVEHLMDYFRKMLPENAYFRGATFHLISYTVATTLFYFIIHLNYVYINIDFWVIMVIIGFLYVCKLQFYPESKNLNNRK</sequence>
<evidence type="ECO:0000250" key="1"/>
<evidence type="ECO:0000255" key="2"/>
<evidence type="ECO:0000305" key="3"/>
<feature type="chain" id="PRO_0000351490" description="Multidrug resistance efflux pump SepA">
    <location>
        <begin position="1"/>
        <end position="157"/>
    </location>
</feature>
<feature type="transmembrane region" description="Helical" evidence="2">
    <location>
        <begin position="18"/>
        <end position="38"/>
    </location>
</feature>
<feature type="transmembrane region" description="Helical" evidence="2">
    <location>
        <begin position="63"/>
        <end position="83"/>
    </location>
</feature>
<feature type="transmembrane region" description="Helical" evidence="2">
    <location>
        <begin position="100"/>
        <end position="120"/>
    </location>
</feature>
<feature type="transmembrane region" description="Helical" evidence="2">
    <location>
        <begin position="122"/>
        <end position="142"/>
    </location>
</feature>
<organism>
    <name type="scientific">Staphylococcus aureus (strain N315)</name>
    <dbReference type="NCBI Taxonomy" id="158879"/>
    <lineage>
        <taxon>Bacteria</taxon>
        <taxon>Bacillati</taxon>
        <taxon>Bacillota</taxon>
        <taxon>Bacilli</taxon>
        <taxon>Bacillales</taxon>
        <taxon>Staphylococcaceae</taxon>
        <taxon>Staphylococcus</taxon>
    </lineage>
</organism>